<gene>
    <name type="primary">PRM1</name>
    <name type="synonym">PRM-1</name>
</gene>
<protein>
    <recommendedName>
        <fullName>Sperm protamine P1</fullName>
    </recommendedName>
    <alternativeName>
        <fullName>Cysteine-rich protamine</fullName>
    </alternativeName>
</protein>
<evidence type="ECO:0000305" key="1"/>
<proteinExistence type="evidence at transcript level"/>
<feature type="chain" id="PRO_0000191454" description="Sperm protamine P1">
    <location>
        <begin position="1"/>
        <end position="48"/>
    </location>
</feature>
<accession>P35304</accession>
<comment type="function">
    <text>Protamines substitute for histones in the chromatin of sperm during the haploid phase of spermatogenesis. They compact sperm DNA into a highly condensed, stable and inactive complex.</text>
</comment>
<comment type="subunit">
    <text>Cross-linked by interchain disulfide bonds around the DNA-helix.</text>
</comment>
<comment type="subcellular location">
    <subcellularLocation>
        <location>Nucleus</location>
    </subcellularLocation>
    <subcellularLocation>
        <location>Chromosome</location>
    </subcellularLocation>
</comment>
<comment type="tissue specificity">
    <text>Testis.</text>
</comment>
<comment type="similarity">
    <text evidence="1">Belongs to the protamine P1 family.</text>
</comment>
<keyword id="KW-0158">Chromosome</keyword>
<keyword id="KW-0217">Developmental protein</keyword>
<keyword id="KW-0221">Differentiation</keyword>
<keyword id="KW-1015">Disulfide bond</keyword>
<keyword id="KW-0226">DNA condensation</keyword>
<keyword id="KW-0238">DNA-binding</keyword>
<keyword id="KW-0544">Nucleosome core</keyword>
<keyword id="KW-0539">Nucleus</keyword>
<keyword id="KW-1185">Reference proteome</keyword>
<keyword id="KW-0744">Spermatogenesis</keyword>
<sequence>MARYRCCRSPSRSRCRRRRRRFYRRRRRCHRRRRRCCRRRYTRRCKRY</sequence>
<name>HSP1_CAVPO</name>
<reference key="1">
    <citation type="submission" date="1991-12" db="EMBL/GenBank/DDBJ databases">
        <authorList>
            <person name="Queralt R."/>
            <person name="Adroer R."/>
            <person name="Oliva R."/>
        </authorList>
    </citation>
    <scope>NUCLEOTIDE SEQUENCE [GENOMIC DNA / MRNA]</scope>
    <source>
        <strain>JM109</strain>
    </source>
</reference>
<organism>
    <name type="scientific">Cavia porcellus</name>
    <name type="common">Guinea pig</name>
    <dbReference type="NCBI Taxonomy" id="10141"/>
    <lineage>
        <taxon>Eukaryota</taxon>
        <taxon>Metazoa</taxon>
        <taxon>Chordata</taxon>
        <taxon>Craniata</taxon>
        <taxon>Vertebrata</taxon>
        <taxon>Euteleostomi</taxon>
        <taxon>Mammalia</taxon>
        <taxon>Eutheria</taxon>
        <taxon>Euarchontoglires</taxon>
        <taxon>Glires</taxon>
        <taxon>Rodentia</taxon>
        <taxon>Hystricomorpha</taxon>
        <taxon>Caviidae</taxon>
        <taxon>Cavia</taxon>
    </lineage>
</organism>
<dbReference type="EMBL" id="M83896">
    <property type="protein sequence ID" value="AAA58349.1"/>
    <property type="molecule type" value="Genomic_DNA"/>
</dbReference>
<dbReference type="EMBL" id="Z11544">
    <property type="protein sequence ID" value="CAA77643.1"/>
    <property type="molecule type" value="mRNA"/>
</dbReference>
<dbReference type="EMBL" id="Z11545">
    <property type="protein sequence ID" value="CAA77644.1"/>
    <property type="molecule type" value="Genomic_DNA"/>
</dbReference>
<dbReference type="PIR" id="S29973">
    <property type="entry name" value="S29973"/>
</dbReference>
<dbReference type="RefSeq" id="NP_001166477.1">
    <property type="nucleotide sequence ID" value="NM_001173006.1"/>
</dbReference>
<dbReference type="GeneID" id="100135606"/>
<dbReference type="KEGG" id="cpoc:100135606"/>
<dbReference type="CTD" id="5619"/>
<dbReference type="HOGENOM" id="CLU_214580_2_0_1"/>
<dbReference type="InParanoid" id="P35304"/>
<dbReference type="Proteomes" id="UP000005447">
    <property type="component" value="Unassembled WGS sequence"/>
</dbReference>
<dbReference type="GO" id="GO:0000786">
    <property type="term" value="C:nucleosome"/>
    <property type="evidence" value="ECO:0007669"/>
    <property type="project" value="UniProtKB-KW"/>
</dbReference>
<dbReference type="GO" id="GO:0005634">
    <property type="term" value="C:nucleus"/>
    <property type="evidence" value="ECO:0007669"/>
    <property type="project" value="UniProtKB-SubCell"/>
</dbReference>
<dbReference type="GO" id="GO:0003677">
    <property type="term" value="F:DNA binding"/>
    <property type="evidence" value="ECO:0007669"/>
    <property type="project" value="UniProtKB-KW"/>
</dbReference>
<dbReference type="GO" id="GO:0030261">
    <property type="term" value="P:chromosome condensation"/>
    <property type="evidence" value="ECO:0007669"/>
    <property type="project" value="UniProtKB-KW"/>
</dbReference>
<dbReference type="GO" id="GO:0035092">
    <property type="term" value="P:sperm DNA condensation"/>
    <property type="evidence" value="ECO:0007669"/>
    <property type="project" value="InterPro"/>
</dbReference>
<dbReference type="InterPro" id="IPR000221">
    <property type="entry name" value="Protamine_P1"/>
</dbReference>
<dbReference type="Pfam" id="PF00260">
    <property type="entry name" value="Protamine_P1"/>
    <property type="match status" value="1"/>
</dbReference>
<dbReference type="PROSITE" id="PS00048">
    <property type="entry name" value="PROTAMINE_P1"/>
    <property type="match status" value="1"/>
</dbReference>